<proteinExistence type="inferred from homology"/>
<accession>Q8TKS2</accession>
<evidence type="ECO:0000255" key="1">
    <source>
        <dbReference type="HAMAP-Rule" id="MF_00203"/>
    </source>
</evidence>
<organism>
    <name type="scientific">Methanosarcina acetivorans (strain ATCC 35395 / DSM 2834 / JCM 12185 / C2A)</name>
    <dbReference type="NCBI Taxonomy" id="188937"/>
    <lineage>
        <taxon>Archaea</taxon>
        <taxon>Methanobacteriati</taxon>
        <taxon>Methanobacteriota</taxon>
        <taxon>Stenosarchaea group</taxon>
        <taxon>Methanomicrobia</taxon>
        <taxon>Methanosarcinales</taxon>
        <taxon>Methanosarcinaceae</taxon>
        <taxon>Methanosarcina</taxon>
    </lineage>
</organism>
<feature type="chain" id="PRO_0000138367" description="UvrABC system protein C">
    <location>
        <begin position="1"/>
        <end position="516"/>
    </location>
</feature>
<feature type="domain" description="GIY-YIG" evidence="1">
    <location>
        <begin position="9"/>
        <end position="87"/>
    </location>
</feature>
<feature type="domain" description="UVR" evidence="1">
    <location>
        <begin position="191"/>
        <end position="226"/>
    </location>
</feature>
<name>UVRC_METAC</name>
<reference key="1">
    <citation type="journal article" date="2002" name="Genome Res.">
        <title>The genome of Methanosarcina acetivorans reveals extensive metabolic and physiological diversity.</title>
        <authorList>
            <person name="Galagan J.E."/>
            <person name="Nusbaum C."/>
            <person name="Roy A."/>
            <person name="Endrizzi M.G."/>
            <person name="Macdonald P."/>
            <person name="FitzHugh W."/>
            <person name="Calvo S."/>
            <person name="Engels R."/>
            <person name="Smirnov S."/>
            <person name="Atnoor D."/>
            <person name="Brown A."/>
            <person name="Allen N."/>
            <person name="Naylor J."/>
            <person name="Stange-Thomann N."/>
            <person name="DeArellano K."/>
            <person name="Johnson R."/>
            <person name="Linton L."/>
            <person name="McEwan P."/>
            <person name="McKernan K."/>
            <person name="Talamas J."/>
            <person name="Tirrell A."/>
            <person name="Ye W."/>
            <person name="Zimmer A."/>
            <person name="Barber R.D."/>
            <person name="Cann I."/>
            <person name="Graham D.E."/>
            <person name="Grahame D.A."/>
            <person name="Guss A.M."/>
            <person name="Hedderich R."/>
            <person name="Ingram-Smith C."/>
            <person name="Kuettner H.C."/>
            <person name="Krzycki J.A."/>
            <person name="Leigh J.A."/>
            <person name="Li W."/>
            <person name="Liu J."/>
            <person name="Mukhopadhyay B."/>
            <person name="Reeve J.N."/>
            <person name="Smith K."/>
            <person name="Springer T.A."/>
            <person name="Umayam L.A."/>
            <person name="White O."/>
            <person name="White R.H."/>
            <person name="de Macario E.C."/>
            <person name="Ferry J.G."/>
            <person name="Jarrell K.F."/>
            <person name="Jing H."/>
            <person name="Macario A.J.L."/>
            <person name="Paulsen I.T."/>
            <person name="Pritchett M."/>
            <person name="Sowers K.R."/>
            <person name="Swanson R.V."/>
            <person name="Zinder S.H."/>
            <person name="Lander E."/>
            <person name="Metcalf W.W."/>
            <person name="Birren B."/>
        </authorList>
    </citation>
    <scope>NUCLEOTIDE SEQUENCE [LARGE SCALE GENOMIC DNA]</scope>
    <source>
        <strain>ATCC 35395 / DSM 2834 / JCM 12185 / C2A</strain>
    </source>
</reference>
<gene>
    <name evidence="1" type="primary">uvrC</name>
    <name type="ordered locus">MA_3324</name>
</gene>
<dbReference type="EMBL" id="AE010299">
    <property type="protein sequence ID" value="AAM06693.1"/>
    <property type="molecule type" value="Genomic_DNA"/>
</dbReference>
<dbReference type="RefSeq" id="WP_011023256.1">
    <property type="nucleotide sequence ID" value="NC_003552.1"/>
</dbReference>
<dbReference type="SMR" id="Q8TKS2"/>
<dbReference type="STRING" id="188937.MA_3324"/>
<dbReference type="EnsemblBacteria" id="AAM06693">
    <property type="protein sequence ID" value="AAM06693"/>
    <property type="gene ID" value="MA_3324"/>
</dbReference>
<dbReference type="GeneID" id="1475217"/>
<dbReference type="KEGG" id="mac:MA_3324"/>
<dbReference type="HOGENOM" id="CLU_014841_3_2_2"/>
<dbReference type="InParanoid" id="Q8TKS2"/>
<dbReference type="OrthoDB" id="121419at2157"/>
<dbReference type="PhylomeDB" id="Q8TKS2"/>
<dbReference type="Proteomes" id="UP000002487">
    <property type="component" value="Chromosome"/>
</dbReference>
<dbReference type="GO" id="GO:0005737">
    <property type="term" value="C:cytoplasm"/>
    <property type="evidence" value="ECO:0007669"/>
    <property type="project" value="UniProtKB-SubCell"/>
</dbReference>
<dbReference type="GO" id="GO:0009380">
    <property type="term" value="C:excinuclease repair complex"/>
    <property type="evidence" value="ECO:0000318"/>
    <property type="project" value="GO_Central"/>
</dbReference>
<dbReference type="GO" id="GO:0003677">
    <property type="term" value="F:DNA binding"/>
    <property type="evidence" value="ECO:0007669"/>
    <property type="project" value="UniProtKB-UniRule"/>
</dbReference>
<dbReference type="GO" id="GO:0009381">
    <property type="term" value="F:excinuclease ABC activity"/>
    <property type="evidence" value="ECO:0007669"/>
    <property type="project" value="UniProtKB-UniRule"/>
</dbReference>
<dbReference type="GO" id="GO:0006974">
    <property type="term" value="P:DNA damage response"/>
    <property type="evidence" value="ECO:0000318"/>
    <property type="project" value="GO_Central"/>
</dbReference>
<dbReference type="GO" id="GO:0006289">
    <property type="term" value="P:nucleotide-excision repair"/>
    <property type="evidence" value="ECO:0007669"/>
    <property type="project" value="UniProtKB-UniRule"/>
</dbReference>
<dbReference type="GO" id="GO:0009432">
    <property type="term" value="P:SOS response"/>
    <property type="evidence" value="ECO:0007669"/>
    <property type="project" value="UniProtKB-UniRule"/>
</dbReference>
<dbReference type="CDD" id="cd10434">
    <property type="entry name" value="GIY-YIG_UvrC_Cho"/>
    <property type="match status" value="1"/>
</dbReference>
<dbReference type="FunFam" id="4.10.860.10:FF:000022">
    <property type="match status" value="1"/>
</dbReference>
<dbReference type="FunFam" id="3.30.420.340:FF:000001">
    <property type="entry name" value="UvrABC system protein C"/>
    <property type="match status" value="1"/>
</dbReference>
<dbReference type="FunFam" id="3.40.1440.10:FF:000001">
    <property type="entry name" value="UvrABC system protein C"/>
    <property type="match status" value="1"/>
</dbReference>
<dbReference type="Gene3D" id="3.40.1440.10">
    <property type="entry name" value="GIY-YIG endonuclease"/>
    <property type="match status" value="1"/>
</dbReference>
<dbReference type="Gene3D" id="4.10.860.10">
    <property type="entry name" value="UVR domain"/>
    <property type="match status" value="1"/>
</dbReference>
<dbReference type="Gene3D" id="3.30.420.340">
    <property type="entry name" value="UvrC, RNAse H endonuclease domain"/>
    <property type="match status" value="1"/>
</dbReference>
<dbReference type="HAMAP" id="MF_00203">
    <property type="entry name" value="UvrC"/>
    <property type="match status" value="1"/>
</dbReference>
<dbReference type="InterPro" id="IPR000305">
    <property type="entry name" value="GIY-YIG_endonuc"/>
</dbReference>
<dbReference type="InterPro" id="IPR035901">
    <property type="entry name" value="GIY-YIG_endonuc_sf"/>
</dbReference>
<dbReference type="InterPro" id="IPR047296">
    <property type="entry name" value="GIY-YIG_UvrC_Cho"/>
</dbReference>
<dbReference type="InterPro" id="IPR001943">
    <property type="entry name" value="UVR_dom"/>
</dbReference>
<dbReference type="InterPro" id="IPR036876">
    <property type="entry name" value="UVR_dom_sf"/>
</dbReference>
<dbReference type="InterPro" id="IPR050066">
    <property type="entry name" value="UvrABC_protein_C"/>
</dbReference>
<dbReference type="InterPro" id="IPR004791">
    <property type="entry name" value="UvrC"/>
</dbReference>
<dbReference type="InterPro" id="IPR001162">
    <property type="entry name" value="UvrC_RNase_H_dom"/>
</dbReference>
<dbReference type="InterPro" id="IPR038476">
    <property type="entry name" value="UvrC_RNase_H_dom_sf"/>
</dbReference>
<dbReference type="NCBIfam" id="TIGR00194">
    <property type="entry name" value="uvrC"/>
    <property type="match status" value="1"/>
</dbReference>
<dbReference type="PANTHER" id="PTHR30562:SF1">
    <property type="entry name" value="UVRABC SYSTEM PROTEIN C"/>
    <property type="match status" value="1"/>
</dbReference>
<dbReference type="PANTHER" id="PTHR30562">
    <property type="entry name" value="UVRC/OXIDOREDUCTASE"/>
    <property type="match status" value="1"/>
</dbReference>
<dbReference type="Pfam" id="PF01541">
    <property type="entry name" value="GIY-YIG"/>
    <property type="match status" value="1"/>
</dbReference>
<dbReference type="Pfam" id="PF02151">
    <property type="entry name" value="UVR"/>
    <property type="match status" value="1"/>
</dbReference>
<dbReference type="Pfam" id="PF22920">
    <property type="entry name" value="UvrC_RNaseH"/>
    <property type="match status" value="1"/>
</dbReference>
<dbReference type="Pfam" id="PF08459">
    <property type="entry name" value="UvrC_RNaseH_dom"/>
    <property type="match status" value="1"/>
</dbReference>
<dbReference type="SMART" id="SM00465">
    <property type="entry name" value="GIYc"/>
    <property type="match status" value="1"/>
</dbReference>
<dbReference type="SUPFAM" id="SSF46600">
    <property type="entry name" value="C-terminal UvrC-binding domain of UvrB"/>
    <property type="match status" value="1"/>
</dbReference>
<dbReference type="SUPFAM" id="SSF82771">
    <property type="entry name" value="GIY-YIG endonuclease"/>
    <property type="match status" value="1"/>
</dbReference>
<dbReference type="PROSITE" id="PS50164">
    <property type="entry name" value="GIY_YIG"/>
    <property type="match status" value="1"/>
</dbReference>
<dbReference type="PROSITE" id="PS50151">
    <property type="entry name" value="UVR"/>
    <property type="match status" value="1"/>
</dbReference>
<dbReference type="PROSITE" id="PS50165">
    <property type="entry name" value="UVRC"/>
    <property type="match status" value="1"/>
</dbReference>
<protein>
    <recommendedName>
        <fullName evidence="1">UvrABC system protein C</fullName>
        <shortName evidence="1">Protein UvrC</shortName>
    </recommendedName>
    <alternativeName>
        <fullName evidence="1">Excinuclease ABC subunit C</fullName>
    </alternativeName>
</protein>
<sequence length="516" mass="59601">MIDLEALPHLPGCYLFKDEEGVVLYVGKAKDLKKRVSSYFQKRDHDPKTTSLVQAARGLDFIVTNTEVEALLLENTLIKKHWPRYNILLKDSKRYACIHLTGEKFPRIRIARKNTGDGEFFGPFVSAKERDYIFEVVRKTFQLRTCKKMPSRACLRYHIGACSGPCIGSISEEEYGEKVKRATSVLKGNIGELIESMEKEMKKMAAKQMFEQAMALRDEISALEYLQEKQNMERQKKHDEDILNYIVRDNTVYLMLFKVYKGTLEDKQDYVFAFGEDFLQEFLVQYYSENDPPEELIVPQVLEESLVEFLAHVKGKKVKVTVPKQGEKKELLDLALKNVEIGFFGDRKKLESLQSKLSLPKLPNVIECFDISHLSGTSTVGSMVQFRGGRPDKHNYRRFKIESVEGIDDFASIAEVVRRRYSRLLEDKHEMPDLIIIDGGKGQLSSAFQELRKLKIRVPIISIAKREEELYVPGLKSPLPIKRNEKASLFVQEIRDEAHRFAITYNRLLRQKSLIK</sequence>
<keyword id="KW-0963">Cytoplasm</keyword>
<keyword id="KW-0227">DNA damage</keyword>
<keyword id="KW-0228">DNA excision</keyword>
<keyword id="KW-0234">DNA repair</keyword>
<keyword id="KW-0267">Excision nuclease</keyword>
<keyword id="KW-1185">Reference proteome</keyword>
<keyword id="KW-0742">SOS response</keyword>
<comment type="function">
    <text evidence="1">The UvrABC repair system catalyzes the recognition and processing of DNA lesions. UvrC both incises the 5' and 3' sides of the lesion. The N-terminal half is responsible for the 3' incision and the C-terminal half is responsible for the 5' incision.</text>
</comment>
<comment type="subunit">
    <text evidence="1">Interacts with UvrB in an incision complex.</text>
</comment>
<comment type="subcellular location">
    <subcellularLocation>
        <location evidence="1">Cytoplasm</location>
    </subcellularLocation>
</comment>
<comment type="similarity">
    <text evidence="1">Belongs to the UvrC family.</text>
</comment>